<evidence type="ECO:0000255" key="1">
    <source>
        <dbReference type="PROSITE-ProRule" id="PRU00303"/>
    </source>
</evidence>
<evidence type="ECO:0000305" key="2"/>
<feature type="signal peptide" evidence="1">
    <location>
        <begin position="1"/>
        <end position="21"/>
    </location>
</feature>
<feature type="chain" id="PRO_0000018046" description="Uncharacterized lipoprotein YfgH">
    <location>
        <begin position="22"/>
        <end position="172"/>
    </location>
</feature>
<feature type="lipid moiety-binding region" description="N-palmitoyl cysteine" evidence="1">
    <location>
        <position position="22"/>
    </location>
</feature>
<feature type="lipid moiety-binding region" description="S-diacylglycerol cysteine" evidence="1">
    <location>
        <position position="22"/>
    </location>
</feature>
<sequence>MMKFKKCLLPVAMLASFTLAGCQSNADDHAADVYQTDQLNTKQETKTVNIISILPAKVAVDNSQNKRNAQAFGALIGAVAGGVIGHNVGSGSNSGTTAGAVGGGAVGAAAGSMVNDKTLVEGVSLTYKEGTKVYTSTQVGKECQFTTGLAVVITTTYNETRIQPNTKCPEKS</sequence>
<reference key="1">
    <citation type="journal article" date="2001" name="Nature">
        <title>Genome sequence of enterohaemorrhagic Escherichia coli O157:H7.</title>
        <authorList>
            <person name="Perna N.T."/>
            <person name="Plunkett G. III"/>
            <person name="Burland V."/>
            <person name="Mau B."/>
            <person name="Glasner J.D."/>
            <person name="Rose D.J."/>
            <person name="Mayhew G.F."/>
            <person name="Evans P.S."/>
            <person name="Gregor J."/>
            <person name="Kirkpatrick H.A."/>
            <person name="Posfai G."/>
            <person name="Hackett J."/>
            <person name="Klink S."/>
            <person name="Boutin A."/>
            <person name="Shao Y."/>
            <person name="Miller L."/>
            <person name="Grotbeck E.J."/>
            <person name="Davis N.W."/>
            <person name="Lim A."/>
            <person name="Dimalanta E.T."/>
            <person name="Potamousis K."/>
            <person name="Apodaca J."/>
            <person name="Anantharaman T.S."/>
            <person name="Lin J."/>
            <person name="Yen G."/>
            <person name="Schwartz D.C."/>
            <person name="Welch R.A."/>
            <person name="Blattner F.R."/>
        </authorList>
    </citation>
    <scope>NUCLEOTIDE SEQUENCE [LARGE SCALE GENOMIC DNA]</scope>
    <source>
        <strain>O157:H7 / EDL933 / ATCC 700927 / EHEC</strain>
    </source>
</reference>
<reference key="2">
    <citation type="journal article" date="2001" name="DNA Res.">
        <title>Complete genome sequence of enterohemorrhagic Escherichia coli O157:H7 and genomic comparison with a laboratory strain K-12.</title>
        <authorList>
            <person name="Hayashi T."/>
            <person name="Makino K."/>
            <person name="Ohnishi M."/>
            <person name="Kurokawa K."/>
            <person name="Ishii K."/>
            <person name="Yokoyama K."/>
            <person name="Han C.-G."/>
            <person name="Ohtsubo E."/>
            <person name="Nakayama K."/>
            <person name="Murata T."/>
            <person name="Tanaka M."/>
            <person name="Tobe T."/>
            <person name="Iida T."/>
            <person name="Takami H."/>
            <person name="Honda T."/>
            <person name="Sasakawa C."/>
            <person name="Ogasawara N."/>
            <person name="Yasunaga T."/>
            <person name="Kuhara S."/>
            <person name="Shiba T."/>
            <person name="Hattori M."/>
            <person name="Shinagawa H."/>
        </authorList>
    </citation>
    <scope>NUCLEOTIDE SEQUENCE [LARGE SCALE GENOMIC DNA]</scope>
    <source>
        <strain>O157:H7 / Sakai / RIMD 0509952 / EHEC</strain>
    </source>
</reference>
<proteinExistence type="inferred from homology"/>
<protein>
    <recommendedName>
        <fullName>Uncharacterized lipoprotein YfgH</fullName>
    </recommendedName>
</protein>
<name>YFGH_ECO57</name>
<keyword id="KW-1003">Cell membrane</keyword>
<keyword id="KW-0449">Lipoprotein</keyword>
<keyword id="KW-0472">Membrane</keyword>
<keyword id="KW-0564">Palmitate</keyword>
<keyword id="KW-1185">Reference proteome</keyword>
<keyword id="KW-0732">Signal</keyword>
<accession>P65291</accession>
<accession>P76572</accession>
<gene>
    <name type="primary">yfgH</name>
    <name type="ordered locus">Z3769</name>
    <name type="ordered locus">ECs3367</name>
</gene>
<dbReference type="EMBL" id="AE005174">
    <property type="protein sequence ID" value="AAG57616.1"/>
    <property type="molecule type" value="Genomic_DNA"/>
</dbReference>
<dbReference type="EMBL" id="BA000007">
    <property type="protein sequence ID" value="BAB36790.2"/>
    <property type="status" value="ALT_INIT"/>
    <property type="molecule type" value="Genomic_DNA"/>
</dbReference>
<dbReference type="PIR" id="D85894">
    <property type="entry name" value="D85894"/>
</dbReference>
<dbReference type="PIR" id="G91049">
    <property type="entry name" value="G91049"/>
</dbReference>
<dbReference type="RefSeq" id="NP_311394.1">
    <property type="nucleotide sequence ID" value="NC_002695.1"/>
</dbReference>
<dbReference type="RefSeq" id="WP_001295476.1">
    <property type="nucleotide sequence ID" value="NZ_SWKA01000005.1"/>
</dbReference>
<dbReference type="SMR" id="P65291"/>
<dbReference type="STRING" id="155864.Z3769"/>
<dbReference type="GeneID" id="915218"/>
<dbReference type="KEGG" id="ece:Z3769"/>
<dbReference type="KEGG" id="ecs:ECs_3367"/>
<dbReference type="PATRIC" id="fig|386585.9.peg.3518"/>
<dbReference type="eggNOG" id="COG3133">
    <property type="taxonomic scope" value="Bacteria"/>
</dbReference>
<dbReference type="HOGENOM" id="CLU_112454_0_0_6"/>
<dbReference type="OMA" id="QSNADEH"/>
<dbReference type="Proteomes" id="UP000000558">
    <property type="component" value="Chromosome"/>
</dbReference>
<dbReference type="Proteomes" id="UP000002519">
    <property type="component" value="Chromosome"/>
</dbReference>
<dbReference type="GO" id="GO:0019867">
    <property type="term" value="C:outer membrane"/>
    <property type="evidence" value="ECO:0007669"/>
    <property type="project" value="InterPro"/>
</dbReference>
<dbReference type="GO" id="GO:0005886">
    <property type="term" value="C:plasma membrane"/>
    <property type="evidence" value="ECO:0007669"/>
    <property type="project" value="UniProtKB-SubCell"/>
</dbReference>
<dbReference type="InterPro" id="IPR051407">
    <property type="entry name" value="Bact_OM_lipoprot/Surf_antigen"/>
</dbReference>
<dbReference type="InterPro" id="IPR008816">
    <property type="entry name" value="Gly_zipper_2TM_dom"/>
</dbReference>
<dbReference type="PANTHER" id="PTHR35603">
    <property type="match status" value="1"/>
</dbReference>
<dbReference type="PANTHER" id="PTHR35603:SF1">
    <property type="entry name" value="OUTER MEMBRANE LIPOPROTEIN SLYB"/>
    <property type="match status" value="1"/>
</dbReference>
<dbReference type="Pfam" id="PF05433">
    <property type="entry name" value="Rick_17kDa_Anti"/>
    <property type="match status" value="1"/>
</dbReference>
<dbReference type="PROSITE" id="PS51257">
    <property type="entry name" value="PROKAR_LIPOPROTEIN"/>
    <property type="match status" value="1"/>
</dbReference>
<comment type="subcellular location">
    <subcellularLocation>
        <location evidence="1">Cell membrane</location>
        <topology evidence="1">Lipid-anchor</topology>
    </subcellularLocation>
</comment>
<comment type="sequence caution" evidence="2">
    <conflict type="erroneous initiation">
        <sequence resource="EMBL-CDS" id="BAB36790"/>
    </conflict>
    <text>Truncated N-terminus.</text>
</comment>
<organism>
    <name type="scientific">Escherichia coli O157:H7</name>
    <dbReference type="NCBI Taxonomy" id="83334"/>
    <lineage>
        <taxon>Bacteria</taxon>
        <taxon>Pseudomonadati</taxon>
        <taxon>Pseudomonadota</taxon>
        <taxon>Gammaproteobacteria</taxon>
        <taxon>Enterobacterales</taxon>
        <taxon>Enterobacteriaceae</taxon>
        <taxon>Escherichia</taxon>
    </lineage>
</organism>